<protein>
    <recommendedName>
        <fullName>Acylphosphatase</fullName>
        <ecNumber>3.6.1.7</ecNumber>
    </recommendedName>
    <alternativeName>
        <fullName>Acylphosphate phosphohydrolase</fullName>
    </alternativeName>
</protein>
<accession>A8F4E8</accession>
<dbReference type="EC" id="3.6.1.7"/>
<dbReference type="EMBL" id="CP000812">
    <property type="protein sequence ID" value="ABV33032.1"/>
    <property type="molecule type" value="Genomic_DNA"/>
</dbReference>
<dbReference type="RefSeq" id="WP_012002513.1">
    <property type="nucleotide sequence ID" value="NZ_BSDV01000001.1"/>
</dbReference>
<dbReference type="SMR" id="A8F4E8"/>
<dbReference type="STRING" id="416591.Tlet_0465"/>
<dbReference type="KEGG" id="tle:Tlet_0465"/>
<dbReference type="eggNOG" id="COG1254">
    <property type="taxonomic scope" value="Bacteria"/>
</dbReference>
<dbReference type="HOGENOM" id="CLU_141932_2_1_0"/>
<dbReference type="OrthoDB" id="9808093at2"/>
<dbReference type="Proteomes" id="UP000002016">
    <property type="component" value="Chromosome"/>
</dbReference>
<dbReference type="GO" id="GO:0003998">
    <property type="term" value="F:acylphosphatase activity"/>
    <property type="evidence" value="ECO:0007669"/>
    <property type="project" value="UniProtKB-EC"/>
</dbReference>
<dbReference type="Gene3D" id="3.30.70.100">
    <property type="match status" value="1"/>
</dbReference>
<dbReference type="InterPro" id="IPR020456">
    <property type="entry name" value="Acylphosphatase"/>
</dbReference>
<dbReference type="InterPro" id="IPR001792">
    <property type="entry name" value="Acylphosphatase-like_dom"/>
</dbReference>
<dbReference type="InterPro" id="IPR036046">
    <property type="entry name" value="Acylphosphatase-like_dom_sf"/>
</dbReference>
<dbReference type="PANTHER" id="PTHR47268">
    <property type="entry name" value="ACYLPHOSPHATASE"/>
    <property type="match status" value="1"/>
</dbReference>
<dbReference type="PANTHER" id="PTHR47268:SF4">
    <property type="entry name" value="ACYLPHOSPHATASE"/>
    <property type="match status" value="1"/>
</dbReference>
<dbReference type="Pfam" id="PF00708">
    <property type="entry name" value="Acylphosphatase"/>
    <property type="match status" value="1"/>
</dbReference>
<dbReference type="SUPFAM" id="SSF54975">
    <property type="entry name" value="Acylphosphatase/BLUF domain-like"/>
    <property type="match status" value="1"/>
</dbReference>
<dbReference type="PROSITE" id="PS51160">
    <property type="entry name" value="ACYLPHOSPHATASE_3"/>
    <property type="match status" value="1"/>
</dbReference>
<name>ACYP_PSELT</name>
<evidence type="ECO:0000255" key="1">
    <source>
        <dbReference type="PROSITE-ProRule" id="PRU00520"/>
    </source>
</evidence>
<evidence type="ECO:0000305" key="2"/>
<reference key="1">
    <citation type="submission" date="2007-08" db="EMBL/GenBank/DDBJ databases">
        <title>Complete sequence of Thermotoga lettingae TMO.</title>
        <authorList>
            <consortium name="US DOE Joint Genome Institute"/>
            <person name="Copeland A."/>
            <person name="Lucas S."/>
            <person name="Lapidus A."/>
            <person name="Barry K."/>
            <person name="Glavina del Rio T."/>
            <person name="Dalin E."/>
            <person name="Tice H."/>
            <person name="Pitluck S."/>
            <person name="Foster B."/>
            <person name="Bruce D."/>
            <person name="Schmutz J."/>
            <person name="Larimer F."/>
            <person name="Land M."/>
            <person name="Hauser L."/>
            <person name="Kyrpides N."/>
            <person name="Mikhailova N."/>
            <person name="Nelson K."/>
            <person name="Gogarten J.P."/>
            <person name="Noll K."/>
            <person name="Richardson P."/>
        </authorList>
    </citation>
    <scope>NUCLEOTIDE SEQUENCE [LARGE SCALE GENOMIC DNA]</scope>
    <source>
        <strain>ATCC BAA-301 / DSM 14385 / NBRC 107922 / TMO</strain>
    </source>
</reference>
<gene>
    <name type="primary">acyP</name>
    <name type="ordered locus">Tlet_0465</name>
</gene>
<keyword id="KW-0378">Hydrolase</keyword>
<keyword id="KW-1185">Reference proteome</keyword>
<organism>
    <name type="scientific">Pseudothermotoga lettingae (strain ATCC BAA-301 / DSM 14385 / NBRC 107922 / TMO)</name>
    <name type="common">Thermotoga lettingae</name>
    <dbReference type="NCBI Taxonomy" id="416591"/>
    <lineage>
        <taxon>Bacteria</taxon>
        <taxon>Thermotogati</taxon>
        <taxon>Thermotogota</taxon>
        <taxon>Thermotogae</taxon>
        <taxon>Thermotogales</taxon>
        <taxon>Thermotogaceae</taxon>
        <taxon>Pseudothermotoga</taxon>
    </lineage>
</organism>
<sequence length="89" mass="9921">MQALFIKISGRVHGVGFRYFTYKLANKMKIKGYVRNAEDGSVEIHAEAPEEILVEFLKAVSIGPPMATVISVKYERVAGQNFTSFDIVP</sequence>
<proteinExistence type="inferred from homology"/>
<comment type="catalytic activity">
    <reaction>
        <text>an acyl phosphate + H2O = a carboxylate + phosphate + H(+)</text>
        <dbReference type="Rhea" id="RHEA:14965"/>
        <dbReference type="ChEBI" id="CHEBI:15377"/>
        <dbReference type="ChEBI" id="CHEBI:15378"/>
        <dbReference type="ChEBI" id="CHEBI:29067"/>
        <dbReference type="ChEBI" id="CHEBI:43474"/>
        <dbReference type="ChEBI" id="CHEBI:59918"/>
        <dbReference type="EC" id="3.6.1.7"/>
    </reaction>
</comment>
<comment type="similarity">
    <text evidence="2">Belongs to the acylphosphatase family.</text>
</comment>
<feature type="chain" id="PRO_0000326832" description="Acylphosphatase">
    <location>
        <begin position="1"/>
        <end position="89"/>
    </location>
</feature>
<feature type="domain" description="Acylphosphatase-like" evidence="1">
    <location>
        <begin position="3"/>
        <end position="89"/>
    </location>
</feature>
<feature type="active site" evidence="1">
    <location>
        <position position="18"/>
    </location>
</feature>
<feature type="active site" evidence="1">
    <location>
        <position position="36"/>
    </location>
</feature>